<sequence length="644" mass="70175">MGRIIGIDLGTTNSCVAILDGDTARVIENAEGDRTTPSIIAYTDDGEILVGQPAKRQSITNPKNTLYAIKRLIGRRYEDEEVQRDIKIMPFDIVRADNGDAWVDVKGRKLAAPQISAEVLKKMKKTAEDFLGEPVTEAVITVPAYFNDAQRQATKDAGRIAGLDVKRIINEPTAAAFAYGVNKVQGERKIAVYDLGGGTFDISIIEIDEMDGEKTFEVLSTNGDTHLGGEDFDNRLINYLVDEFKREQGIDLRKDQLALQRLKDSAEKAKIELSSAQQTEVNLPYITADATGPKHMNIKVTRSKLESLVEDLVKKTIEPLKTALKDAGLSVSQLDDIILVGGQTRMPMVQKAVADFFGKEPRKDVNPDEAVAMGAAIQGAVLAGEKHDVLLLDVTPLSLGIETMGSVMTTLIEKNTTIPTKKSQVFSTADDNQSAVTIHVLQGERKRATDNKSLGQFNLEGIRPAPRGLPQIEVTFDIDADGILHVSAKDKETGKEQNITIQASSGLSDDEIQRMVREAEANAAEDKKFEELVQARNHADALIHATRKQITEAGTALPADEKAKIDAAVKALEDALKSEDKATIEAKQQELMTASQKLMEIAQQQAQQHQHAHQGADAGADTAGGKAHDDVVDAEFEEVKDDKK</sequence>
<organism>
    <name type="scientific">Tolumonas auensis (strain DSM 9187 / NBRC 110442 / TA 4)</name>
    <dbReference type="NCBI Taxonomy" id="595494"/>
    <lineage>
        <taxon>Bacteria</taxon>
        <taxon>Pseudomonadati</taxon>
        <taxon>Pseudomonadota</taxon>
        <taxon>Gammaproteobacteria</taxon>
        <taxon>Aeromonadales</taxon>
        <taxon>Aeromonadaceae</taxon>
        <taxon>Tolumonas</taxon>
    </lineage>
</organism>
<gene>
    <name evidence="1" type="primary">dnaK</name>
    <name type="ordered locus">Tola_2257</name>
</gene>
<keyword id="KW-0067">ATP-binding</keyword>
<keyword id="KW-0143">Chaperone</keyword>
<keyword id="KW-0547">Nucleotide-binding</keyword>
<keyword id="KW-0597">Phosphoprotein</keyword>
<keyword id="KW-1185">Reference proteome</keyword>
<keyword id="KW-0346">Stress response</keyword>
<evidence type="ECO:0000255" key="1">
    <source>
        <dbReference type="HAMAP-Rule" id="MF_00332"/>
    </source>
</evidence>
<evidence type="ECO:0000256" key="2">
    <source>
        <dbReference type="SAM" id="MobiDB-lite"/>
    </source>
</evidence>
<dbReference type="EMBL" id="CP001616">
    <property type="protein sequence ID" value="ACQ93855.1"/>
    <property type="molecule type" value="Genomic_DNA"/>
</dbReference>
<dbReference type="RefSeq" id="WP_015879323.1">
    <property type="nucleotide sequence ID" value="NC_012691.1"/>
</dbReference>
<dbReference type="SMR" id="C4L8Y5"/>
<dbReference type="STRING" id="595494.Tola_2257"/>
<dbReference type="KEGG" id="tau:Tola_2257"/>
<dbReference type="eggNOG" id="COG0443">
    <property type="taxonomic scope" value="Bacteria"/>
</dbReference>
<dbReference type="HOGENOM" id="CLU_005965_2_1_6"/>
<dbReference type="OrthoDB" id="9766019at2"/>
<dbReference type="Proteomes" id="UP000009073">
    <property type="component" value="Chromosome"/>
</dbReference>
<dbReference type="GO" id="GO:0005524">
    <property type="term" value="F:ATP binding"/>
    <property type="evidence" value="ECO:0007669"/>
    <property type="project" value="UniProtKB-UniRule"/>
</dbReference>
<dbReference type="GO" id="GO:0140662">
    <property type="term" value="F:ATP-dependent protein folding chaperone"/>
    <property type="evidence" value="ECO:0007669"/>
    <property type="project" value="InterPro"/>
</dbReference>
<dbReference type="GO" id="GO:0051082">
    <property type="term" value="F:unfolded protein binding"/>
    <property type="evidence" value="ECO:0007669"/>
    <property type="project" value="InterPro"/>
</dbReference>
<dbReference type="CDD" id="cd10234">
    <property type="entry name" value="ASKHA_NBD_HSP70_DnaK-like"/>
    <property type="match status" value="1"/>
</dbReference>
<dbReference type="FunFam" id="2.60.34.10:FF:000014">
    <property type="entry name" value="Chaperone protein DnaK HSP70"/>
    <property type="match status" value="1"/>
</dbReference>
<dbReference type="FunFam" id="3.30.30.30:FF:000003">
    <property type="entry name" value="Heat shock protein 9"/>
    <property type="match status" value="1"/>
</dbReference>
<dbReference type="FunFam" id="1.20.1270.10:FF:000001">
    <property type="entry name" value="Molecular chaperone DnaK"/>
    <property type="match status" value="1"/>
</dbReference>
<dbReference type="FunFam" id="3.30.420.40:FF:000004">
    <property type="entry name" value="Molecular chaperone DnaK"/>
    <property type="match status" value="1"/>
</dbReference>
<dbReference type="FunFam" id="3.90.640.10:FF:000003">
    <property type="entry name" value="Molecular chaperone DnaK"/>
    <property type="match status" value="1"/>
</dbReference>
<dbReference type="Gene3D" id="1.20.1270.10">
    <property type="match status" value="1"/>
</dbReference>
<dbReference type="Gene3D" id="3.30.420.40">
    <property type="match status" value="2"/>
</dbReference>
<dbReference type="Gene3D" id="3.90.640.10">
    <property type="entry name" value="Actin, Chain A, domain 4"/>
    <property type="match status" value="1"/>
</dbReference>
<dbReference type="Gene3D" id="2.60.34.10">
    <property type="entry name" value="Substrate Binding Domain Of DNAk, Chain A, domain 1"/>
    <property type="match status" value="1"/>
</dbReference>
<dbReference type="HAMAP" id="MF_00332">
    <property type="entry name" value="DnaK"/>
    <property type="match status" value="1"/>
</dbReference>
<dbReference type="InterPro" id="IPR043129">
    <property type="entry name" value="ATPase_NBD"/>
</dbReference>
<dbReference type="InterPro" id="IPR012725">
    <property type="entry name" value="Chaperone_DnaK"/>
</dbReference>
<dbReference type="InterPro" id="IPR018181">
    <property type="entry name" value="Heat_shock_70_CS"/>
</dbReference>
<dbReference type="InterPro" id="IPR029048">
    <property type="entry name" value="HSP70_C_sf"/>
</dbReference>
<dbReference type="InterPro" id="IPR029047">
    <property type="entry name" value="HSP70_peptide-bd_sf"/>
</dbReference>
<dbReference type="InterPro" id="IPR013126">
    <property type="entry name" value="Hsp_70_fam"/>
</dbReference>
<dbReference type="NCBIfam" id="NF001413">
    <property type="entry name" value="PRK00290.1"/>
    <property type="match status" value="1"/>
</dbReference>
<dbReference type="NCBIfam" id="NF003520">
    <property type="entry name" value="PRK05183.1"/>
    <property type="match status" value="1"/>
</dbReference>
<dbReference type="NCBIfam" id="TIGR02350">
    <property type="entry name" value="prok_dnaK"/>
    <property type="match status" value="1"/>
</dbReference>
<dbReference type="PANTHER" id="PTHR19375">
    <property type="entry name" value="HEAT SHOCK PROTEIN 70KDA"/>
    <property type="match status" value="1"/>
</dbReference>
<dbReference type="Pfam" id="PF00012">
    <property type="entry name" value="HSP70"/>
    <property type="match status" value="1"/>
</dbReference>
<dbReference type="PRINTS" id="PR00301">
    <property type="entry name" value="HEATSHOCK70"/>
</dbReference>
<dbReference type="SUPFAM" id="SSF53067">
    <property type="entry name" value="Actin-like ATPase domain"/>
    <property type="match status" value="2"/>
</dbReference>
<dbReference type="SUPFAM" id="SSF100920">
    <property type="entry name" value="Heat shock protein 70kD (HSP70), peptide-binding domain"/>
    <property type="match status" value="1"/>
</dbReference>
<dbReference type="PROSITE" id="PS00297">
    <property type="entry name" value="HSP70_1"/>
    <property type="match status" value="1"/>
</dbReference>
<dbReference type="PROSITE" id="PS00329">
    <property type="entry name" value="HSP70_2"/>
    <property type="match status" value="1"/>
</dbReference>
<dbReference type="PROSITE" id="PS01036">
    <property type="entry name" value="HSP70_3"/>
    <property type="match status" value="1"/>
</dbReference>
<comment type="function">
    <text evidence="1">Acts as a chaperone.</text>
</comment>
<comment type="induction">
    <text evidence="1">By stress conditions e.g. heat shock.</text>
</comment>
<comment type="similarity">
    <text evidence="1">Belongs to the heat shock protein 70 family.</text>
</comment>
<feature type="chain" id="PRO_1000205200" description="Chaperone protein DnaK">
    <location>
        <begin position="1"/>
        <end position="644"/>
    </location>
</feature>
<feature type="region of interest" description="Disordered" evidence="2">
    <location>
        <begin position="601"/>
        <end position="644"/>
    </location>
</feature>
<feature type="compositionally biased region" description="Low complexity" evidence="2">
    <location>
        <begin position="602"/>
        <end position="625"/>
    </location>
</feature>
<feature type="compositionally biased region" description="Acidic residues" evidence="2">
    <location>
        <begin position="632"/>
        <end position="644"/>
    </location>
</feature>
<feature type="modified residue" description="Phosphothreonine; by autocatalysis" evidence="1">
    <location>
        <position position="199"/>
    </location>
</feature>
<name>DNAK_TOLAT</name>
<accession>C4L8Y5</accession>
<reference key="1">
    <citation type="submission" date="2009-05" db="EMBL/GenBank/DDBJ databases">
        <title>Complete sequence of Tolumonas auensis DSM 9187.</title>
        <authorList>
            <consortium name="US DOE Joint Genome Institute"/>
            <person name="Lucas S."/>
            <person name="Copeland A."/>
            <person name="Lapidus A."/>
            <person name="Glavina del Rio T."/>
            <person name="Tice H."/>
            <person name="Bruce D."/>
            <person name="Goodwin L."/>
            <person name="Pitluck S."/>
            <person name="Chertkov O."/>
            <person name="Brettin T."/>
            <person name="Detter J.C."/>
            <person name="Han C."/>
            <person name="Larimer F."/>
            <person name="Land M."/>
            <person name="Hauser L."/>
            <person name="Kyrpides N."/>
            <person name="Mikhailova N."/>
            <person name="Spring S."/>
            <person name="Beller H."/>
        </authorList>
    </citation>
    <scope>NUCLEOTIDE SEQUENCE [LARGE SCALE GENOMIC DNA]</scope>
    <source>
        <strain>DSM 9187 / NBRC 110442 / TA 4</strain>
    </source>
</reference>
<protein>
    <recommendedName>
        <fullName evidence="1">Chaperone protein DnaK</fullName>
    </recommendedName>
    <alternativeName>
        <fullName evidence="1">HSP70</fullName>
    </alternativeName>
    <alternativeName>
        <fullName evidence="1">Heat shock 70 kDa protein</fullName>
    </alternativeName>
    <alternativeName>
        <fullName evidence="1">Heat shock protein 70</fullName>
    </alternativeName>
</protein>
<proteinExistence type="inferred from homology"/>